<organism>
    <name type="scientific">Coxiella burnetii (strain CbuG_Q212)</name>
    <name type="common">Coxiella burnetii (strain Q212)</name>
    <dbReference type="NCBI Taxonomy" id="434923"/>
    <lineage>
        <taxon>Bacteria</taxon>
        <taxon>Pseudomonadati</taxon>
        <taxon>Pseudomonadota</taxon>
        <taxon>Gammaproteobacteria</taxon>
        <taxon>Legionellales</taxon>
        <taxon>Coxiellaceae</taxon>
        <taxon>Coxiella</taxon>
    </lineage>
</organism>
<name>RS7_COXB2</name>
<proteinExistence type="inferred from homology"/>
<evidence type="ECO:0000255" key="1">
    <source>
        <dbReference type="HAMAP-Rule" id="MF_00480"/>
    </source>
</evidence>
<evidence type="ECO:0000256" key="2">
    <source>
        <dbReference type="SAM" id="MobiDB-lite"/>
    </source>
</evidence>
<evidence type="ECO:0000305" key="3"/>
<keyword id="KW-0687">Ribonucleoprotein</keyword>
<keyword id="KW-0689">Ribosomal protein</keyword>
<keyword id="KW-0694">RNA-binding</keyword>
<keyword id="KW-0699">rRNA-binding</keyword>
<keyword id="KW-0820">tRNA-binding</keyword>
<sequence length="191" mass="21289">MARRKAAPKRETLPDPLFHSELLAKFINAVMRNGKKSVAEKIVYGALDVVAKRVQNKSGEQGDGDGEGGGKAGGIKKRSLGDIRTDENARALALETFKGALDKVMPNVEVKSRRVGGSTYQVPVEIRMARRQALARRWLVEYANKRNEKTMVLRLAHEILDAVEGRGGAIKKREDVHRMAKANQAFAHYRW</sequence>
<comment type="function">
    <text evidence="1">One of the primary rRNA binding proteins, it binds directly to 16S rRNA where it nucleates assembly of the head domain of the 30S subunit. Is located at the subunit interface close to the decoding center, probably blocks exit of the E-site tRNA.</text>
</comment>
<comment type="subunit">
    <text evidence="1">Part of the 30S ribosomal subunit. Contacts proteins S9 and S11.</text>
</comment>
<comment type="similarity">
    <text evidence="1">Belongs to the universal ribosomal protein uS7 family.</text>
</comment>
<reference key="1">
    <citation type="journal article" date="2009" name="Infect. Immun.">
        <title>Comparative genomics reveal extensive transposon-mediated genomic plasticity and diversity among potential effector proteins within the genus Coxiella.</title>
        <authorList>
            <person name="Beare P.A."/>
            <person name="Unsworth N."/>
            <person name="Andoh M."/>
            <person name="Voth D.E."/>
            <person name="Omsland A."/>
            <person name="Gilk S.D."/>
            <person name="Williams K.P."/>
            <person name="Sobral B.W."/>
            <person name="Kupko J.J. III"/>
            <person name="Porcella S.F."/>
            <person name="Samuel J.E."/>
            <person name="Heinzen R.A."/>
        </authorList>
    </citation>
    <scope>NUCLEOTIDE SEQUENCE [LARGE SCALE GENOMIC DNA]</scope>
    <source>
        <strain>CbuG_Q212</strain>
    </source>
</reference>
<protein>
    <recommendedName>
        <fullName evidence="1">Small ribosomal subunit protein uS7</fullName>
    </recommendedName>
    <alternativeName>
        <fullName evidence="3">30S ribosomal protein S7</fullName>
    </alternativeName>
</protein>
<gene>
    <name evidence="1" type="primary">rpsG</name>
    <name type="ordered locus">CbuG_1771</name>
</gene>
<accession>B6J267</accession>
<feature type="chain" id="PRO_1000125925" description="Small ribosomal subunit protein uS7">
    <location>
        <begin position="1"/>
        <end position="191"/>
    </location>
</feature>
<feature type="region of interest" description="Disordered" evidence="2">
    <location>
        <begin position="56"/>
        <end position="80"/>
    </location>
</feature>
<dbReference type="EMBL" id="CP001019">
    <property type="protein sequence ID" value="ACJ19045.1"/>
    <property type="molecule type" value="Genomic_DNA"/>
</dbReference>
<dbReference type="RefSeq" id="WP_012570414.1">
    <property type="nucleotide sequence ID" value="NC_011527.1"/>
</dbReference>
<dbReference type="SMR" id="B6J267"/>
<dbReference type="KEGG" id="cbg:CbuG_1771"/>
<dbReference type="HOGENOM" id="CLU_072226_1_1_6"/>
<dbReference type="GO" id="GO:0015935">
    <property type="term" value="C:small ribosomal subunit"/>
    <property type="evidence" value="ECO:0007669"/>
    <property type="project" value="InterPro"/>
</dbReference>
<dbReference type="GO" id="GO:0019843">
    <property type="term" value="F:rRNA binding"/>
    <property type="evidence" value="ECO:0007669"/>
    <property type="project" value="UniProtKB-UniRule"/>
</dbReference>
<dbReference type="GO" id="GO:0003735">
    <property type="term" value="F:structural constituent of ribosome"/>
    <property type="evidence" value="ECO:0007669"/>
    <property type="project" value="InterPro"/>
</dbReference>
<dbReference type="GO" id="GO:0000049">
    <property type="term" value="F:tRNA binding"/>
    <property type="evidence" value="ECO:0007669"/>
    <property type="project" value="UniProtKB-UniRule"/>
</dbReference>
<dbReference type="GO" id="GO:0006412">
    <property type="term" value="P:translation"/>
    <property type="evidence" value="ECO:0007669"/>
    <property type="project" value="UniProtKB-UniRule"/>
</dbReference>
<dbReference type="CDD" id="cd14869">
    <property type="entry name" value="uS7_Bacteria"/>
    <property type="match status" value="1"/>
</dbReference>
<dbReference type="Gene3D" id="1.10.455.10">
    <property type="entry name" value="Ribosomal protein S7 domain"/>
    <property type="match status" value="1"/>
</dbReference>
<dbReference type="HAMAP" id="MF_00480_B">
    <property type="entry name" value="Ribosomal_uS7_B"/>
    <property type="match status" value="1"/>
</dbReference>
<dbReference type="InterPro" id="IPR000235">
    <property type="entry name" value="Ribosomal_uS7"/>
</dbReference>
<dbReference type="InterPro" id="IPR005717">
    <property type="entry name" value="Ribosomal_uS7_bac/org-type"/>
</dbReference>
<dbReference type="InterPro" id="IPR020606">
    <property type="entry name" value="Ribosomal_uS7_CS"/>
</dbReference>
<dbReference type="InterPro" id="IPR023798">
    <property type="entry name" value="Ribosomal_uS7_dom"/>
</dbReference>
<dbReference type="InterPro" id="IPR036823">
    <property type="entry name" value="Ribosomal_uS7_dom_sf"/>
</dbReference>
<dbReference type="NCBIfam" id="TIGR01029">
    <property type="entry name" value="rpsG_bact"/>
    <property type="match status" value="1"/>
</dbReference>
<dbReference type="PANTHER" id="PTHR11205">
    <property type="entry name" value="RIBOSOMAL PROTEIN S7"/>
    <property type="match status" value="1"/>
</dbReference>
<dbReference type="Pfam" id="PF00177">
    <property type="entry name" value="Ribosomal_S7"/>
    <property type="match status" value="1"/>
</dbReference>
<dbReference type="PIRSF" id="PIRSF002122">
    <property type="entry name" value="RPS7p_RPS7a_RPS5e_RPS7o"/>
    <property type="match status" value="1"/>
</dbReference>
<dbReference type="SUPFAM" id="SSF47973">
    <property type="entry name" value="Ribosomal protein S7"/>
    <property type="match status" value="1"/>
</dbReference>
<dbReference type="PROSITE" id="PS00052">
    <property type="entry name" value="RIBOSOMAL_S7"/>
    <property type="match status" value="1"/>
</dbReference>